<reference key="1">
    <citation type="submission" date="2004-06" db="EMBL/GenBank/DDBJ databases">
        <authorList>
            <consortium name="NIH - Xenopus Gene Collection (XGC) project"/>
        </authorList>
    </citation>
    <scope>NUCLEOTIDE SEQUENCE [LARGE SCALE MRNA]</scope>
    <source>
        <tissue>Embryo</tissue>
    </source>
</reference>
<organism>
    <name type="scientific">Xenopus laevis</name>
    <name type="common">African clawed frog</name>
    <dbReference type="NCBI Taxonomy" id="8355"/>
    <lineage>
        <taxon>Eukaryota</taxon>
        <taxon>Metazoa</taxon>
        <taxon>Chordata</taxon>
        <taxon>Craniata</taxon>
        <taxon>Vertebrata</taxon>
        <taxon>Euteleostomi</taxon>
        <taxon>Amphibia</taxon>
        <taxon>Batrachia</taxon>
        <taxon>Anura</taxon>
        <taxon>Pipoidea</taxon>
        <taxon>Pipidae</taxon>
        <taxon>Xenopodinae</taxon>
        <taxon>Xenopus</taxon>
        <taxon>Xenopus</taxon>
    </lineage>
</organism>
<name>EEIG1_XENLA</name>
<gene>
    <name type="primary">eeig1</name>
    <name type="synonym">fam102a</name>
</gene>
<evidence type="ECO:0000250" key="1">
    <source>
        <dbReference type="UniProtKB" id="Q78T81"/>
    </source>
</evidence>
<evidence type="ECO:0000255" key="2">
    <source>
        <dbReference type="PROSITE-ProRule" id="PRU01186"/>
    </source>
</evidence>
<evidence type="ECO:0000256" key="3">
    <source>
        <dbReference type="SAM" id="MobiDB-lite"/>
    </source>
</evidence>
<evidence type="ECO:0000305" key="4"/>
<protein>
    <recommendedName>
        <fullName>Early estrogen-induced gene 1 protein</fullName>
        <shortName>EEIG1</shortName>
    </recommendedName>
</protein>
<dbReference type="EMBL" id="BC073478">
    <property type="protein sequence ID" value="AAH73478.1"/>
    <property type="molecule type" value="mRNA"/>
</dbReference>
<dbReference type="RefSeq" id="NP_001085889.1">
    <property type="nucleotide sequence ID" value="NM_001092420.1"/>
</dbReference>
<dbReference type="DNASU" id="444316"/>
<dbReference type="GeneID" id="444316"/>
<dbReference type="KEGG" id="xla:444316"/>
<dbReference type="AGR" id="Xenbase:XB-GENE-5892622"/>
<dbReference type="CTD" id="444316"/>
<dbReference type="Xenbase" id="XB-GENE-5892622">
    <property type="gene designation" value="eeig1.L"/>
</dbReference>
<dbReference type="OrthoDB" id="3365224at2759"/>
<dbReference type="Proteomes" id="UP000186698">
    <property type="component" value="Chromosome 8L"/>
</dbReference>
<dbReference type="Bgee" id="444316">
    <property type="expression patterns" value="Expressed in stomach and 15 other cell types or tissues"/>
</dbReference>
<dbReference type="GO" id="GO:0005737">
    <property type="term" value="C:cytoplasm"/>
    <property type="evidence" value="ECO:0000250"/>
    <property type="project" value="UniProtKB"/>
</dbReference>
<dbReference type="GO" id="GO:0045121">
    <property type="term" value="C:membrane raft"/>
    <property type="evidence" value="ECO:0000250"/>
    <property type="project" value="UniProtKB"/>
</dbReference>
<dbReference type="GO" id="GO:0005634">
    <property type="term" value="C:nucleus"/>
    <property type="evidence" value="ECO:0000250"/>
    <property type="project" value="UniProtKB"/>
</dbReference>
<dbReference type="InterPro" id="IPR039931">
    <property type="entry name" value="EEIG1/2-like"/>
</dbReference>
<dbReference type="InterPro" id="IPR019448">
    <property type="entry name" value="NT-C2"/>
</dbReference>
<dbReference type="PANTHER" id="PTHR21456:SF2">
    <property type="entry name" value="EARLY ESTROGEN-INDUCED GENE 1 PROTEIN"/>
    <property type="match status" value="1"/>
</dbReference>
<dbReference type="PANTHER" id="PTHR21456">
    <property type="entry name" value="FAMILY WITH SEQUENCE SIMILARITY 102"/>
    <property type="match status" value="1"/>
</dbReference>
<dbReference type="Pfam" id="PF10358">
    <property type="entry name" value="NT-C2"/>
    <property type="match status" value="1"/>
</dbReference>
<dbReference type="PROSITE" id="PS51840">
    <property type="entry name" value="C2_NT"/>
    <property type="match status" value="1"/>
</dbReference>
<proteinExistence type="evidence at transcript level"/>
<keyword id="KW-0963">Cytoplasm</keyword>
<keyword id="KW-0539">Nucleus</keyword>
<keyword id="KW-1185">Reference proteome</keyword>
<feature type="chain" id="PRO_0000261636" description="Early estrogen-induced gene 1 protein">
    <location>
        <begin position="1"/>
        <end position="377"/>
    </location>
</feature>
<feature type="domain" description="C2 NT-type" evidence="2">
    <location>
        <begin position="2"/>
        <end position="145"/>
    </location>
</feature>
<feature type="region of interest" description="Disordered" evidence="3">
    <location>
        <begin position="160"/>
        <end position="313"/>
    </location>
</feature>
<feature type="compositionally biased region" description="Polar residues" evidence="3">
    <location>
        <begin position="160"/>
        <end position="173"/>
    </location>
</feature>
<feature type="compositionally biased region" description="Polar residues" evidence="3">
    <location>
        <begin position="188"/>
        <end position="198"/>
    </location>
</feature>
<feature type="compositionally biased region" description="Polar residues" evidence="3">
    <location>
        <begin position="222"/>
        <end position="234"/>
    </location>
</feature>
<feature type="compositionally biased region" description="Low complexity" evidence="3">
    <location>
        <begin position="256"/>
        <end position="269"/>
    </location>
</feature>
<feature type="compositionally biased region" description="Basic and acidic residues" evidence="3">
    <location>
        <begin position="274"/>
        <end position="285"/>
    </location>
</feature>
<accession>Q6GNM6</accession>
<sequence length="377" mass="41420">MAFLTKKKKFKFQTSFNLEELTAVPFVNGVLFCKVRLLDGGDFVSQSSREEVQENCVRWKKKFNFVCKMSANSATGVLDPCVCRVSVRKELKGGKTYSKLGFADLNLAEFAGSGSAARCCLLEGYDTRNTRQDNSILKVNIGMSLLSGDPCFKTPLSTVKTVSPPGQDSSLQMTCKGEGTVRSAGGTVRQNRSRQAMLSSGVFDETEQNLSSPEETPHSGHSRNSSQASQQSKISGHSSEHSRCSSMSDLTHRRNTSTSSSVSGGLSLTAEGTEPERDVKPEKPPRPIRPPLHPDRHSRRKKDSVESQPTWVDDTRIDADDIVEKIMQSQDFSDVSNNEDSHLRLFVSRDGSTTLSGIQLANRISAGVFEPVMIEIR</sequence>
<comment type="function">
    <text evidence="1">May be involved in osteoclast differentiation.</text>
</comment>
<comment type="subcellular location">
    <subcellularLocation>
        <location evidence="1">Nucleus</location>
    </subcellularLocation>
    <subcellularLocation>
        <location evidence="1">Cytoplasm</location>
    </subcellularLocation>
</comment>
<comment type="similarity">
    <text evidence="4">Belongs to the EEIG family.</text>
</comment>